<reference evidence="11" key="1">
    <citation type="journal article" date="2007" name="Biochem. J.">
        <title>A novel horse alpha-defensin: gene transcription, recombinant expression and characterization of the structure and function.</title>
        <authorList>
            <person name="Bruhn O."/>
            <person name="Regenhard P."/>
            <person name="Michalek M."/>
            <person name="Paul S."/>
            <person name="Gelhaus C."/>
            <person name="Jung S."/>
            <person name="Thaller G."/>
            <person name="Podschun R."/>
            <person name="Leippe M."/>
            <person name="Grotzinger J."/>
            <person name="Kalm E."/>
        </authorList>
    </citation>
    <scope>NUCLEOTIDE SEQUENCE [MRNA]</scope>
    <scope>FUNCTION</scope>
    <scope>TISSUE SPECIFICITY</scope>
    <scope>CIRCULAR DICHROISM ANALYSIS</scope>
    <source>
        <tissue evidence="9">Small intestine</tissue>
    </source>
</reference>
<reference key="2">
    <citation type="journal article" date="2009" name="Vet. Immunol. Immunopathol.">
        <title>Antimicrobial properties of the equine alpha-defensin DEFA1 against bacterial horse pathogens.</title>
        <authorList>
            <person name="Bruhn O."/>
            <person name="Cauchard J."/>
            <person name="Schlusselhuber M."/>
            <person name="Gelhaus C."/>
            <person name="Podschun R."/>
            <person name="Thaller G."/>
            <person name="Laugier C."/>
            <person name="Leippe M."/>
            <person name="Groetzinger J."/>
        </authorList>
    </citation>
    <scope>FUNCTION</scope>
</reference>
<reference key="3">
    <citation type="journal article" date="2012" name="Antimicrob. Agents Chemother.">
        <title>In vitro potential of equine DEFA1 and eCATH1 as alternative antimicrobial drugs in rhodococcosis treatment.</title>
        <authorList>
            <person name="Schlusselhuber M."/>
            <person name="Jung S."/>
            <person name="Bruhn O."/>
            <person name="Goux D."/>
            <person name="Leippe M."/>
            <person name="Leclercq R."/>
            <person name="Laugier C."/>
            <person name="Groetzinger J."/>
            <person name="Cauchard J."/>
        </authorList>
    </citation>
    <scope>FUNCTION</scope>
    <scope>CIRCULAR DICHROISM ANALYSIS</scope>
</reference>
<reference evidence="12" key="4">
    <citation type="journal article" date="2015" name="Biochem. Biophys. Res. Commun.">
        <title>Solution structure and functional studies of the highly potent equine antimicrobial peptide DEFA1.</title>
        <authorList>
            <person name="Michalek M."/>
            <person name="Jung S."/>
            <person name="Shomali M.R."/>
            <person name="Cauchard S."/>
            <person name="Sonnichsen F.D."/>
            <person name="Grotzinger J."/>
        </authorList>
    </citation>
    <scope>STRUCTURE BY NMR OF 65-98</scope>
    <scope>FUNCTION</scope>
    <scope>DISULFIDE BONDS</scope>
</reference>
<gene>
    <name evidence="9 11" type="primary">DEFA1</name>
</gene>
<keyword id="KW-0002">3D-structure</keyword>
<keyword id="KW-0044">Antibiotic</keyword>
<keyword id="KW-0929">Antimicrobial</keyword>
<keyword id="KW-0211">Defensin</keyword>
<keyword id="KW-1015">Disulfide bond</keyword>
<keyword id="KW-1185">Reference proteome</keyword>
<keyword id="KW-0964">Secreted</keyword>
<keyword id="KW-0732">Signal</keyword>
<sequence>MRTLTLLTALLLLALQVQTQSLEETADQVPAQDQPGAEAQDITISFAGDERSAREASKSLIGTASCTCRRAWICRWGERHSGKCIDQKGSTYRLCCRR</sequence>
<comment type="function">
    <text evidence="5 6 7 8">Has broad-spectrum antimicrobial properties (PubMed:17620056, PubMed:19211153). The antimicrobial activity decreases in the present of salt in vitro (PubMed:19211153). Binds anionic phospholipids, which leads to the aggregation of liposomes in vitro (PubMed:25769951). Membrane permeabilization of the target cells is an essential part of the peptide's mode of antimicrobial activity (PubMed:17620056, PubMed:22232283). No hemolytic activity against sheep or horse erythrocytes (PubMed:22232283). Has antibacterial activity against the bacterial horse pathogens Gram-positive R.equi ATCC 33701 P(-) (minimum bactericidal concentration or MBC=5 ug/ml) and R.equi ATCC 33701 P(+) (MBC=5 ug/ml), which are resistant against beta-lactam antibiotics. Also has antibacterial activity against highly infectious wild-type strain R.equi 85F P(+) (MBC=5 ug/ml), S.equi subsp. equi (MBC=5 ug/ml), S.equi subsp. zooepidemicus (MBC=5 ug/ml), S.dysgalactiae subsp. equisimilis (MBC=10 ug/ml), S.choleraesuis subsp. choleraesuis serovar Typhimurium (MBC=10 ug/ml), and P.multocida subsp. multocida (MBC=&gt;10 ug/ml) (PubMed:19211153). Probably contributes to the antimicrobial barrier function of the small bowel mucosa (Probable).</text>
</comment>
<comment type="subcellular location">
    <subcellularLocation>
        <location evidence="2">Secreted</location>
    </subcellularLocation>
</comment>
<comment type="tissue specificity">
    <text evidence="5">Paneth cells of the small bowel.</text>
</comment>
<comment type="similarity">
    <text evidence="4 10">Belongs to the alpha-defensin family.</text>
</comment>
<evidence type="ECO:0000250" key="1">
    <source>
        <dbReference type="UniProtKB" id="P59665"/>
    </source>
</evidence>
<evidence type="ECO:0000250" key="2">
    <source>
        <dbReference type="UniProtKB" id="Q01523"/>
    </source>
</evidence>
<evidence type="ECO:0000250" key="3">
    <source>
        <dbReference type="UniProtKB" id="Q62716"/>
    </source>
</evidence>
<evidence type="ECO:0000255" key="4"/>
<evidence type="ECO:0000269" key="5">
    <source>
    </source>
</evidence>
<evidence type="ECO:0000269" key="6">
    <source>
    </source>
</evidence>
<evidence type="ECO:0000269" key="7">
    <source>
    </source>
</evidence>
<evidence type="ECO:0000269" key="8">
    <source>
    </source>
</evidence>
<evidence type="ECO:0000303" key="9">
    <source>
    </source>
</evidence>
<evidence type="ECO:0000305" key="10"/>
<evidence type="ECO:0000312" key="11">
    <source>
        <dbReference type="EMBL" id="ABP96800.1"/>
    </source>
</evidence>
<evidence type="ECO:0007744" key="12">
    <source>
        <dbReference type="PDB" id="2MXQ"/>
    </source>
</evidence>
<evidence type="ECO:0007829" key="13">
    <source>
        <dbReference type="PDB" id="2MXQ"/>
    </source>
</evidence>
<dbReference type="EMBL" id="EF379126">
    <property type="protein sequence ID" value="ABP96800.1"/>
    <property type="molecule type" value="mRNA"/>
</dbReference>
<dbReference type="PDB" id="2MXQ">
    <property type="method" value="NMR"/>
    <property type="chains" value="A=65-98"/>
</dbReference>
<dbReference type="PDBsum" id="2MXQ"/>
<dbReference type="SMR" id="A6YB85"/>
<dbReference type="STRING" id="9796.ENSECAP00000009578"/>
<dbReference type="PaxDb" id="9796-ENSECAP00000009578"/>
<dbReference type="PeptideAtlas" id="A6YB85"/>
<dbReference type="Ensembl" id="ENSECAT00000012154.4">
    <property type="protein sequence ID" value="ENSECAP00000009578.2"/>
    <property type="gene ID" value="ENSECAG00000011787.4"/>
</dbReference>
<dbReference type="GeneTree" id="ENSGT00940000153268"/>
<dbReference type="InParanoid" id="A6YB85"/>
<dbReference type="OMA" id="CTCRLVY"/>
<dbReference type="EvolutionaryTrace" id="A6YB85"/>
<dbReference type="Proteomes" id="UP000002281">
    <property type="component" value="Chromosome 27"/>
</dbReference>
<dbReference type="Bgee" id="ENSECAG00000011787">
    <property type="expression patterns" value="Expressed in testis"/>
</dbReference>
<dbReference type="GO" id="GO:0005615">
    <property type="term" value="C:extracellular space"/>
    <property type="evidence" value="ECO:0000318"/>
    <property type="project" value="GO_Central"/>
</dbReference>
<dbReference type="GO" id="GO:0005543">
    <property type="term" value="F:phospholipid binding"/>
    <property type="evidence" value="ECO:0000314"/>
    <property type="project" value="UniProtKB"/>
</dbReference>
<dbReference type="GO" id="GO:0019731">
    <property type="term" value="P:antibacterial humoral response"/>
    <property type="evidence" value="ECO:0000318"/>
    <property type="project" value="GO_Central"/>
</dbReference>
<dbReference type="GO" id="GO:0061844">
    <property type="term" value="P:antimicrobial humoral immune response mediated by antimicrobial peptide"/>
    <property type="evidence" value="ECO:0000318"/>
    <property type="project" value="GO_Central"/>
</dbReference>
<dbReference type="GO" id="GO:0071222">
    <property type="term" value="P:cellular response to lipopolysaccharide"/>
    <property type="evidence" value="ECO:0000318"/>
    <property type="project" value="GO_Central"/>
</dbReference>
<dbReference type="GO" id="GO:0042742">
    <property type="term" value="P:defense response to bacterium"/>
    <property type="evidence" value="ECO:0000314"/>
    <property type="project" value="UniProtKB"/>
</dbReference>
<dbReference type="GO" id="GO:0050829">
    <property type="term" value="P:defense response to Gram-negative bacterium"/>
    <property type="evidence" value="ECO:0000318"/>
    <property type="project" value="GO_Central"/>
</dbReference>
<dbReference type="GO" id="GO:0050830">
    <property type="term" value="P:defense response to Gram-positive bacterium"/>
    <property type="evidence" value="ECO:0000318"/>
    <property type="project" value="GO_Central"/>
</dbReference>
<dbReference type="GO" id="GO:0051673">
    <property type="term" value="P:disruption of plasma membrane integrity in another organism"/>
    <property type="evidence" value="ECO:0000318"/>
    <property type="project" value="GO_Central"/>
</dbReference>
<dbReference type="GO" id="GO:0002227">
    <property type="term" value="P:innate immune response in mucosa"/>
    <property type="evidence" value="ECO:0000318"/>
    <property type="project" value="GO_Central"/>
</dbReference>
<dbReference type="InterPro" id="IPR016327">
    <property type="entry name" value="Alpha-defensin"/>
</dbReference>
<dbReference type="InterPro" id="IPR006081">
    <property type="entry name" value="Alpha-defensin_C"/>
</dbReference>
<dbReference type="InterPro" id="IPR002366">
    <property type="entry name" value="Alpha-defensin_N"/>
</dbReference>
<dbReference type="PANTHER" id="PTHR11876">
    <property type="entry name" value="ALPHA-DEFENSIN 1"/>
    <property type="match status" value="1"/>
</dbReference>
<dbReference type="PANTHER" id="PTHR11876:SF28">
    <property type="entry name" value="ALPHA-DEFENSIN 1"/>
    <property type="match status" value="1"/>
</dbReference>
<dbReference type="Pfam" id="PF00323">
    <property type="entry name" value="Defensin_1"/>
    <property type="match status" value="1"/>
</dbReference>
<dbReference type="Pfam" id="PF00879">
    <property type="entry name" value="Defensin_propep"/>
    <property type="match status" value="1"/>
</dbReference>
<dbReference type="PIRSF" id="PIRSF001875">
    <property type="entry name" value="Alpha-defensin"/>
    <property type="match status" value="1"/>
</dbReference>
<dbReference type="SMART" id="SM01418">
    <property type="entry name" value="Defensin_propep"/>
    <property type="match status" value="1"/>
</dbReference>
<feature type="signal peptide" evidence="1">
    <location>
        <begin position="1"/>
        <end position="19"/>
    </location>
</feature>
<feature type="propeptide" id="PRO_0000438588" evidence="3">
    <location>
        <begin position="20"/>
        <end position="63"/>
    </location>
</feature>
<feature type="peptide" id="PRO_5002705446" description="Alpha-defensin 1">
    <location>
        <begin position="64"/>
        <end position="98"/>
    </location>
</feature>
<feature type="disulfide bond" evidence="8 12">
    <location>
        <begin position="66"/>
        <end position="96"/>
    </location>
</feature>
<feature type="disulfide bond" evidence="8 12">
    <location>
        <begin position="68"/>
        <end position="84"/>
    </location>
</feature>
<feature type="disulfide bond" evidence="8 12">
    <location>
        <begin position="74"/>
        <end position="95"/>
    </location>
</feature>
<feature type="strand" evidence="13">
    <location>
        <begin position="71"/>
        <end position="73"/>
    </location>
</feature>
<feature type="strand" evidence="13">
    <location>
        <begin position="75"/>
        <end position="77"/>
    </location>
</feature>
<feature type="turn" evidence="13">
    <location>
        <begin position="85"/>
        <end position="88"/>
    </location>
</feature>
<proteinExistence type="evidence at protein level"/>
<name>DEFA1_HORSE</name>
<protein>
    <recommendedName>
        <fullName evidence="9 11">Alpha-defensin 1</fullName>
    </recommendedName>
</protein>
<accession>A6YB85</accession>
<organism evidence="11">
    <name type="scientific">Equus caballus</name>
    <name type="common">Horse</name>
    <dbReference type="NCBI Taxonomy" id="9796"/>
    <lineage>
        <taxon>Eukaryota</taxon>
        <taxon>Metazoa</taxon>
        <taxon>Chordata</taxon>
        <taxon>Craniata</taxon>
        <taxon>Vertebrata</taxon>
        <taxon>Euteleostomi</taxon>
        <taxon>Mammalia</taxon>
        <taxon>Eutheria</taxon>
        <taxon>Laurasiatheria</taxon>
        <taxon>Perissodactyla</taxon>
        <taxon>Equidae</taxon>
        <taxon>Equus</taxon>
    </lineage>
</organism>